<gene>
    <name evidence="1" type="primary">rpsF</name>
    <name type="ordered locus">SPA4208</name>
</gene>
<proteinExistence type="inferred from homology"/>
<comment type="function">
    <text evidence="1">Binds together with bS18 to 16S ribosomal RNA.</text>
</comment>
<comment type="similarity">
    <text evidence="1">Belongs to the bacterial ribosomal protein bS6 family.</text>
</comment>
<organism>
    <name type="scientific">Salmonella paratyphi A (strain ATCC 9150 / SARB42)</name>
    <dbReference type="NCBI Taxonomy" id="295319"/>
    <lineage>
        <taxon>Bacteria</taxon>
        <taxon>Pseudomonadati</taxon>
        <taxon>Pseudomonadota</taxon>
        <taxon>Gammaproteobacteria</taxon>
        <taxon>Enterobacterales</taxon>
        <taxon>Enterobacteriaceae</taxon>
        <taxon>Salmonella</taxon>
    </lineage>
</organism>
<name>RS6_SALPA</name>
<dbReference type="EMBL" id="CP000026">
    <property type="protein sequence ID" value="AAV79945.1"/>
    <property type="molecule type" value="Genomic_DNA"/>
</dbReference>
<dbReference type="RefSeq" id="WP_001216673.1">
    <property type="nucleotide sequence ID" value="NC_006511.1"/>
</dbReference>
<dbReference type="SMR" id="Q5PJ58"/>
<dbReference type="GeneID" id="92804768"/>
<dbReference type="KEGG" id="spt:SPA4208"/>
<dbReference type="HOGENOM" id="CLU_113441_6_1_6"/>
<dbReference type="Proteomes" id="UP000008185">
    <property type="component" value="Chromosome"/>
</dbReference>
<dbReference type="GO" id="GO:0022627">
    <property type="term" value="C:cytosolic small ribosomal subunit"/>
    <property type="evidence" value="ECO:0007669"/>
    <property type="project" value="TreeGrafter"/>
</dbReference>
<dbReference type="GO" id="GO:0070181">
    <property type="term" value="F:small ribosomal subunit rRNA binding"/>
    <property type="evidence" value="ECO:0007669"/>
    <property type="project" value="TreeGrafter"/>
</dbReference>
<dbReference type="GO" id="GO:0003735">
    <property type="term" value="F:structural constituent of ribosome"/>
    <property type="evidence" value="ECO:0007669"/>
    <property type="project" value="InterPro"/>
</dbReference>
<dbReference type="GO" id="GO:0006412">
    <property type="term" value="P:translation"/>
    <property type="evidence" value="ECO:0007669"/>
    <property type="project" value="UniProtKB-UniRule"/>
</dbReference>
<dbReference type="CDD" id="cd00473">
    <property type="entry name" value="bS6"/>
    <property type="match status" value="1"/>
</dbReference>
<dbReference type="FunFam" id="3.30.70.60:FF:000003">
    <property type="entry name" value="30S ribosomal protein S6"/>
    <property type="match status" value="1"/>
</dbReference>
<dbReference type="Gene3D" id="3.30.70.60">
    <property type="match status" value="1"/>
</dbReference>
<dbReference type="HAMAP" id="MF_00360">
    <property type="entry name" value="Ribosomal_bS6"/>
    <property type="match status" value="1"/>
</dbReference>
<dbReference type="InterPro" id="IPR000529">
    <property type="entry name" value="Ribosomal_bS6"/>
</dbReference>
<dbReference type="InterPro" id="IPR020815">
    <property type="entry name" value="Ribosomal_bS6_CS"/>
</dbReference>
<dbReference type="InterPro" id="IPR035980">
    <property type="entry name" value="Ribosomal_bS6_sf"/>
</dbReference>
<dbReference type="InterPro" id="IPR020814">
    <property type="entry name" value="Ribosomal_S6_plastid/chlpt"/>
</dbReference>
<dbReference type="InterPro" id="IPR014717">
    <property type="entry name" value="Transl_elong_EF1B/ribsomal_bS6"/>
</dbReference>
<dbReference type="NCBIfam" id="TIGR00166">
    <property type="entry name" value="S6"/>
    <property type="match status" value="1"/>
</dbReference>
<dbReference type="PANTHER" id="PTHR21011">
    <property type="entry name" value="MITOCHONDRIAL 28S RIBOSOMAL PROTEIN S6"/>
    <property type="match status" value="1"/>
</dbReference>
<dbReference type="PANTHER" id="PTHR21011:SF1">
    <property type="entry name" value="SMALL RIBOSOMAL SUBUNIT PROTEIN BS6M"/>
    <property type="match status" value="1"/>
</dbReference>
<dbReference type="Pfam" id="PF01250">
    <property type="entry name" value="Ribosomal_S6"/>
    <property type="match status" value="1"/>
</dbReference>
<dbReference type="SUPFAM" id="SSF54995">
    <property type="entry name" value="Ribosomal protein S6"/>
    <property type="match status" value="1"/>
</dbReference>
<dbReference type="PROSITE" id="PS01048">
    <property type="entry name" value="RIBOSOMAL_S6"/>
    <property type="match status" value="1"/>
</dbReference>
<feature type="chain" id="PRO_0000229575" description="Small ribosomal subunit protein bS6">
    <location>
        <begin position="1"/>
        <end position="131"/>
    </location>
</feature>
<feature type="region of interest" description="Disordered" evidence="2">
    <location>
        <begin position="98"/>
        <end position="131"/>
    </location>
</feature>
<feature type="compositionally biased region" description="Basic and acidic residues" evidence="2">
    <location>
        <begin position="104"/>
        <end position="116"/>
    </location>
</feature>
<feature type="compositionally biased region" description="Acidic residues" evidence="2">
    <location>
        <begin position="120"/>
        <end position="131"/>
    </location>
</feature>
<protein>
    <recommendedName>
        <fullName evidence="1">Small ribosomal subunit protein bS6</fullName>
    </recommendedName>
    <alternativeName>
        <fullName evidence="3">30S ribosomal protein S6</fullName>
    </alternativeName>
</protein>
<sequence length="131" mass="15173">MRHYEIVFMVHPDQSEQVPGMIERYSAAITGAEGKIHRLEDWGRRQLAYPINKLHKAHYVLMNVEAPQEVIDELETTFRFNDAVIRSMVMRTKHAVTEASPMVKAKDERRERRDDFANETADDAEAGDSEE</sequence>
<evidence type="ECO:0000255" key="1">
    <source>
        <dbReference type="HAMAP-Rule" id="MF_00360"/>
    </source>
</evidence>
<evidence type="ECO:0000256" key="2">
    <source>
        <dbReference type="SAM" id="MobiDB-lite"/>
    </source>
</evidence>
<evidence type="ECO:0000305" key="3"/>
<reference key="1">
    <citation type="journal article" date="2004" name="Nat. Genet.">
        <title>Comparison of genome degradation in Paratyphi A and Typhi, human-restricted serovars of Salmonella enterica that cause typhoid.</title>
        <authorList>
            <person name="McClelland M."/>
            <person name="Sanderson K.E."/>
            <person name="Clifton S.W."/>
            <person name="Latreille P."/>
            <person name="Porwollik S."/>
            <person name="Sabo A."/>
            <person name="Meyer R."/>
            <person name="Bieri T."/>
            <person name="Ozersky P."/>
            <person name="McLellan M."/>
            <person name="Harkins C.R."/>
            <person name="Wang C."/>
            <person name="Nguyen C."/>
            <person name="Berghoff A."/>
            <person name="Elliott G."/>
            <person name="Kohlberg S."/>
            <person name="Strong C."/>
            <person name="Du F."/>
            <person name="Carter J."/>
            <person name="Kremizki C."/>
            <person name="Layman D."/>
            <person name="Leonard S."/>
            <person name="Sun H."/>
            <person name="Fulton L."/>
            <person name="Nash W."/>
            <person name="Miner T."/>
            <person name="Minx P."/>
            <person name="Delehaunty K."/>
            <person name="Fronick C."/>
            <person name="Magrini V."/>
            <person name="Nhan M."/>
            <person name="Warren W."/>
            <person name="Florea L."/>
            <person name="Spieth J."/>
            <person name="Wilson R.K."/>
        </authorList>
    </citation>
    <scope>NUCLEOTIDE SEQUENCE [LARGE SCALE GENOMIC DNA]</scope>
    <source>
        <strain>ATCC 9150 / SARB42</strain>
    </source>
</reference>
<keyword id="KW-0687">Ribonucleoprotein</keyword>
<keyword id="KW-0689">Ribosomal protein</keyword>
<keyword id="KW-0694">RNA-binding</keyword>
<keyword id="KW-0699">rRNA-binding</keyword>
<accession>Q5PJ58</accession>